<organism>
    <name type="scientific">Streptococcus agalactiae serotype V (strain ATCC BAA-611 / 2603 V/R)</name>
    <dbReference type="NCBI Taxonomy" id="208435"/>
    <lineage>
        <taxon>Bacteria</taxon>
        <taxon>Bacillati</taxon>
        <taxon>Bacillota</taxon>
        <taxon>Bacilli</taxon>
        <taxon>Lactobacillales</taxon>
        <taxon>Streptococcaceae</taxon>
        <taxon>Streptococcus</taxon>
    </lineage>
</organism>
<comment type="function">
    <text evidence="1">Plays an important role in DNA replication, recombination and repair. Binds to ssDNA and to an array of partner proteins to recruit them to their sites of action during DNA metabolism.</text>
</comment>
<comment type="subunit">
    <text evidence="1">Homotetramer.</text>
</comment>
<keyword id="KW-0227">DNA damage</keyword>
<keyword id="KW-0233">DNA recombination</keyword>
<keyword id="KW-0234">DNA repair</keyword>
<keyword id="KW-0235">DNA replication</keyword>
<keyword id="KW-0238">DNA-binding</keyword>
<keyword id="KW-1185">Reference proteome</keyword>
<evidence type="ECO:0000255" key="1">
    <source>
        <dbReference type="HAMAP-Rule" id="MF_00984"/>
    </source>
</evidence>
<evidence type="ECO:0000256" key="2">
    <source>
        <dbReference type="SAM" id="MobiDB-lite"/>
    </source>
</evidence>
<gene>
    <name type="primary">ssb4</name>
    <name type="ordered locus">SAG1863</name>
</gene>
<accession>Q8DXI7</accession>
<dbReference type="EMBL" id="AE009948">
    <property type="protein sequence ID" value="AAN00726.1"/>
    <property type="molecule type" value="Genomic_DNA"/>
</dbReference>
<dbReference type="RefSeq" id="NP_688853.1">
    <property type="nucleotide sequence ID" value="NC_004116.1"/>
</dbReference>
<dbReference type="RefSeq" id="WP_000609565.1">
    <property type="nucleotide sequence ID" value="NC_004116.1"/>
</dbReference>
<dbReference type="SMR" id="Q8DXI7"/>
<dbReference type="STRING" id="208435.SAG1863"/>
<dbReference type="KEGG" id="sag:SAG1863"/>
<dbReference type="PATRIC" id="fig|208435.3.peg.1870"/>
<dbReference type="HOGENOM" id="CLU_078758_6_1_9"/>
<dbReference type="OrthoDB" id="9809878at2"/>
<dbReference type="Proteomes" id="UP000000821">
    <property type="component" value="Chromosome"/>
</dbReference>
<dbReference type="GO" id="GO:0009295">
    <property type="term" value="C:nucleoid"/>
    <property type="evidence" value="ECO:0007669"/>
    <property type="project" value="TreeGrafter"/>
</dbReference>
<dbReference type="GO" id="GO:0003697">
    <property type="term" value="F:single-stranded DNA binding"/>
    <property type="evidence" value="ECO:0007669"/>
    <property type="project" value="UniProtKB-UniRule"/>
</dbReference>
<dbReference type="GO" id="GO:0006310">
    <property type="term" value="P:DNA recombination"/>
    <property type="evidence" value="ECO:0007669"/>
    <property type="project" value="UniProtKB-UniRule"/>
</dbReference>
<dbReference type="GO" id="GO:0006281">
    <property type="term" value="P:DNA repair"/>
    <property type="evidence" value="ECO:0007669"/>
    <property type="project" value="UniProtKB-UniRule"/>
</dbReference>
<dbReference type="GO" id="GO:0006260">
    <property type="term" value="P:DNA replication"/>
    <property type="evidence" value="ECO:0007669"/>
    <property type="project" value="UniProtKB-UniRule"/>
</dbReference>
<dbReference type="CDD" id="cd04496">
    <property type="entry name" value="SSB_OBF"/>
    <property type="match status" value="1"/>
</dbReference>
<dbReference type="FunFam" id="2.40.50.140:FF:000084">
    <property type="entry name" value="Single-stranded DNA-binding protein"/>
    <property type="match status" value="1"/>
</dbReference>
<dbReference type="Gene3D" id="2.40.50.140">
    <property type="entry name" value="Nucleic acid-binding proteins"/>
    <property type="match status" value="1"/>
</dbReference>
<dbReference type="HAMAP" id="MF_00984">
    <property type="entry name" value="SSB"/>
    <property type="match status" value="1"/>
</dbReference>
<dbReference type="InterPro" id="IPR012340">
    <property type="entry name" value="NA-bd_OB-fold"/>
</dbReference>
<dbReference type="InterPro" id="IPR000424">
    <property type="entry name" value="Primosome_PriB/ssb"/>
</dbReference>
<dbReference type="InterPro" id="IPR011344">
    <property type="entry name" value="ssDNA-bd"/>
</dbReference>
<dbReference type="NCBIfam" id="TIGR00621">
    <property type="entry name" value="ssb"/>
    <property type="match status" value="1"/>
</dbReference>
<dbReference type="PANTHER" id="PTHR10302">
    <property type="entry name" value="SINGLE-STRANDED DNA-BINDING PROTEIN"/>
    <property type="match status" value="1"/>
</dbReference>
<dbReference type="PANTHER" id="PTHR10302:SF27">
    <property type="entry name" value="SINGLE-STRANDED DNA-BINDING PROTEIN"/>
    <property type="match status" value="1"/>
</dbReference>
<dbReference type="Pfam" id="PF00436">
    <property type="entry name" value="SSB"/>
    <property type="match status" value="1"/>
</dbReference>
<dbReference type="PIRSF" id="PIRSF002070">
    <property type="entry name" value="SSB"/>
    <property type="match status" value="1"/>
</dbReference>
<dbReference type="SUPFAM" id="SSF50249">
    <property type="entry name" value="Nucleic acid-binding proteins"/>
    <property type="match status" value="1"/>
</dbReference>
<dbReference type="PROSITE" id="PS50935">
    <property type="entry name" value="SSB"/>
    <property type="match status" value="1"/>
</dbReference>
<name>SSB4_STRA5</name>
<protein>
    <recommendedName>
        <fullName evidence="1">Single-stranded DNA-binding protein 4</fullName>
        <shortName evidence="1">SSB 4</shortName>
    </recommendedName>
</protein>
<reference key="1">
    <citation type="journal article" date="2002" name="Proc. Natl. Acad. Sci. U.S.A.">
        <title>Complete genome sequence and comparative genomic analysis of an emerging human pathogen, serotype V Streptococcus agalactiae.</title>
        <authorList>
            <person name="Tettelin H."/>
            <person name="Masignani V."/>
            <person name="Cieslewicz M.J."/>
            <person name="Eisen J.A."/>
            <person name="Peterson S.N."/>
            <person name="Wessels M.R."/>
            <person name="Paulsen I.T."/>
            <person name="Nelson K.E."/>
            <person name="Margarit I."/>
            <person name="Read T.D."/>
            <person name="Madoff L.C."/>
            <person name="Wolf A.M."/>
            <person name="Beanan M.J."/>
            <person name="Brinkac L.M."/>
            <person name="Daugherty S.C."/>
            <person name="DeBoy R.T."/>
            <person name="Durkin A.S."/>
            <person name="Kolonay J.F."/>
            <person name="Madupu R."/>
            <person name="Lewis M.R."/>
            <person name="Radune D."/>
            <person name="Fedorova N.B."/>
            <person name="Scanlan D."/>
            <person name="Khouri H.M."/>
            <person name="Mulligan S."/>
            <person name="Carty H.A."/>
            <person name="Cline R.T."/>
            <person name="Van Aken S.E."/>
            <person name="Gill J."/>
            <person name="Scarselli M."/>
            <person name="Mora M."/>
            <person name="Iacobini E.T."/>
            <person name="Brettoni C."/>
            <person name="Galli G."/>
            <person name="Mariani M."/>
            <person name="Vegni F."/>
            <person name="Maione D."/>
            <person name="Rinaudo D."/>
            <person name="Rappuoli R."/>
            <person name="Telford J.L."/>
            <person name="Kasper D.L."/>
            <person name="Grandi G."/>
            <person name="Fraser C.M."/>
        </authorList>
    </citation>
    <scope>NUCLEOTIDE SEQUENCE [LARGE SCALE GENOMIC DNA]</scope>
    <source>
        <strain>ATCC BAA-611 / 2603 V/R</strain>
    </source>
</reference>
<feature type="chain" id="PRO_0000096112" description="Single-stranded DNA-binding protein 4">
    <location>
        <begin position="1"/>
        <end position="138"/>
    </location>
</feature>
<feature type="domain" description="SSB" evidence="1">
    <location>
        <begin position="1"/>
        <end position="104"/>
    </location>
</feature>
<feature type="region of interest" description="Disordered" evidence="2">
    <location>
        <begin position="107"/>
        <end position="138"/>
    </location>
</feature>
<feature type="short sequence motif" description="Important for interaction with partner proteins" evidence="1">
    <location>
        <begin position="133"/>
        <end position="138"/>
    </location>
</feature>
<proteinExistence type="inferred from homology"/>
<sequence>MINNVVLIGRLTRDVELRYTPSNIANATFNLAVNRNFKNAAGDREADFINCVMWRQQAENLANWTKKGMLIGITGRIQTRSYENQQGQRIYVTEVVADSFQILEKRDNSTNQASMDDQLPPSFGNSQPMDISDDDLPF</sequence>